<gene>
    <name type="ordered locus">MIMI_R528</name>
</gene>
<accession>Q5UQ94</accession>
<comment type="subcellular location">
    <subcellularLocation>
        <location evidence="1">Virion</location>
    </subcellularLocation>
</comment>
<comment type="similarity">
    <text evidence="2">Belongs to the 5'-3' exonuclease family.</text>
</comment>
<protein>
    <recommendedName>
        <fullName>Putative 5'-3' exonuclease R528</fullName>
        <ecNumber>3.1.11.-</ecNumber>
    </recommendedName>
</protein>
<keyword id="KW-0269">Exonuclease</keyword>
<keyword id="KW-0378">Hydrolase</keyword>
<keyword id="KW-0540">Nuclease</keyword>
<keyword id="KW-1185">Reference proteome</keyword>
<keyword id="KW-0946">Virion</keyword>
<proteinExistence type="evidence at protein level"/>
<sequence length="621" mass="74127">MSEEYKKRILIQYENYLLQQDNYVYLATKNSVNWSRNKITPGTAFMNKLVNYLKSDQIQSLLNTNRQDMNIIITDMYEVGEGEKKIVNYVHKYLHNTSDTVMVYSPDADVILLCMLMPVSNLYMLRHNQETSKKFKRNIYDLINIKMLKNNISYYINNNPDFSRENFIVDNINYDLVCISTLFGNDFVPKIETINVKKGFQNIMDAYLKTLIELKERNTYLVRKVNGKFNLSLTFLRRVIKNLLPEENDYIKHNKLYNTYVTAGQIKNVFSYMEINSENIVSVYNEFMREYGDLKNLIKNNGNLTYFETNDQFMNSLKKSICIIMDDQCVNTSYLSNKDTIKLLRNYYIKTREFPRVNINLNTWSHSTDDRRHRNIIRENNYNKYQIEIYKFDKMLDEYYVKFNAQPLDLSRNKIEQFYETYFGIILLDKNKNLTEEANEIMRDYTEGLLWVFDYYFNDKTYVNRWYYQHEKAPLLTHLSMYLDGINHDYFNDLLSGLKKYRVKNIKNFFNPVEQLIYVSPMIPGIIKLLPSNYRSYITSDHLDPFLKTYFIDVEEIVDQLWDQKISDEIDCRSIPYLNKCIIKSIEKPSSSEDKLFLTAIRKVKPTATSHKRSKSIEPDF</sequence>
<dbReference type="EC" id="3.1.11.-"/>
<dbReference type="EMBL" id="AY653733">
    <property type="protein sequence ID" value="AAV50792.1"/>
    <property type="molecule type" value="Genomic_DNA"/>
</dbReference>
<dbReference type="Proteomes" id="UP000001134">
    <property type="component" value="Genome"/>
</dbReference>
<dbReference type="GO" id="GO:0044423">
    <property type="term" value="C:virion component"/>
    <property type="evidence" value="ECO:0007669"/>
    <property type="project" value="UniProtKB-KW"/>
</dbReference>
<dbReference type="GO" id="GO:0004534">
    <property type="term" value="F:5'-3' RNA exonuclease activity"/>
    <property type="evidence" value="ECO:0007669"/>
    <property type="project" value="TreeGrafter"/>
</dbReference>
<dbReference type="GO" id="GO:0003723">
    <property type="term" value="F:RNA binding"/>
    <property type="evidence" value="ECO:0007669"/>
    <property type="project" value="TreeGrafter"/>
</dbReference>
<dbReference type="GO" id="GO:0000956">
    <property type="term" value="P:nuclear-transcribed mRNA catabolic process"/>
    <property type="evidence" value="ECO:0007669"/>
    <property type="project" value="TreeGrafter"/>
</dbReference>
<dbReference type="Gene3D" id="3.40.50.12390">
    <property type="match status" value="1"/>
</dbReference>
<dbReference type="InterPro" id="IPR027073">
    <property type="entry name" value="5_3_exoribonuclease"/>
</dbReference>
<dbReference type="InterPro" id="IPR041412">
    <property type="entry name" value="Xrn1_helical"/>
</dbReference>
<dbReference type="InterPro" id="IPR004859">
    <property type="entry name" value="Xrn1_N"/>
</dbReference>
<dbReference type="PANTHER" id="PTHR12341:SF7">
    <property type="entry name" value="5'-3' EXORIBONUCLEASE 1"/>
    <property type="match status" value="1"/>
</dbReference>
<dbReference type="PANTHER" id="PTHR12341">
    <property type="entry name" value="5'-&gt;3' EXORIBONUCLEASE"/>
    <property type="match status" value="1"/>
</dbReference>
<dbReference type="Pfam" id="PF17846">
    <property type="entry name" value="XRN_M"/>
    <property type="match status" value="1"/>
</dbReference>
<dbReference type="Pfam" id="PF03159">
    <property type="entry name" value="XRN_N"/>
    <property type="match status" value="1"/>
</dbReference>
<evidence type="ECO:0000269" key="1">
    <source>
    </source>
</evidence>
<evidence type="ECO:0000305" key="2"/>
<reference key="1">
    <citation type="journal article" date="2004" name="Science">
        <title>The 1.2-megabase genome sequence of Mimivirus.</title>
        <authorList>
            <person name="Raoult D."/>
            <person name="Audic S."/>
            <person name="Robert C."/>
            <person name="Abergel C."/>
            <person name="Renesto P."/>
            <person name="Ogata H."/>
            <person name="La Scola B."/>
            <person name="Susan M."/>
            <person name="Claverie J.-M."/>
        </authorList>
    </citation>
    <scope>NUCLEOTIDE SEQUENCE [LARGE SCALE GENOMIC DNA]</scope>
    <source>
        <strain>Rowbotham-Bradford</strain>
    </source>
</reference>
<reference key="2">
    <citation type="journal article" date="2006" name="J. Virol.">
        <title>Mimivirus giant particles incorporate a large fraction of anonymous and unique gene products.</title>
        <authorList>
            <person name="Renesto P."/>
            <person name="Abergel C."/>
            <person name="Decloquement P."/>
            <person name="Moinier D."/>
            <person name="Azza S."/>
            <person name="Ogata H."/>
            <person name="Fourquet P."/>
            <person name="Gorvel J.-P."/>
            <person name="Claverie J.-M."/>
            <person name="Raoult D."/>
        </authorList>
    </citation>
    <scope>IDENTIFICATION BY MASS SPECTROMETRY [LARGE SCALE ANALYSIS]</scope>
    <scope>SUBCELLULAR LOCATION</scope>
</reference>
<name>YR528_MIMIV</name>
<organism>
    <name type="scientific">Acanthamoeba polyphaga mimivirus</name>
    <name type="common">APMV</name>
    <dbReference type="NCBI Taxonomy" id="212035"/>
    <lineage>
        <taxon>Viruses</taxon>
        <taxon>Varidnaviria</taxon>
        <taxon>Bamfordvirae</taxon>
        <taxon>Nucleocytoviricota</taxon>
        <taxon>Megaviricetes</taxon>
        <taxon>Imitervirales</taxon>
        <taxon>Mimiviridae</taxon>
        <taxon>Megamimivirinae</taxon>
        <taxon>Mimivirus</taxon>
        <taxon>Mimivirus bradfordmassiliense</taxon>
    </lineage>
</organism>
<feature type="chain" id="PRO_0000248965" description="Putative 5'-3' exonuclease R528">
    <location>
        <begin position="1"/>
        <end position="621"/>
    </location>
</feature>
<organismHost>
    <name type="scientific">Acanthamoeba polyphaga</name>
    <name type="common">Amoeba</name>
    <dbReference type="NCBI Taxonomy" id="5757"/>
</organismHost>